<accession>Q9MIZ0</accession>
<gene>
    <name type="primary">mt-nd1</name>
    <name type="synonym">mtnd1</name>
    <name type="synonym">nd1</name>
</gene>
<sequence length="324" mass="35738">MLDILTSHLINPLAYAVPVLIAVAFLTLVERKVLGYMQLRKGPNVMGPRGLLQSVADGVKLFIKEPIRPSMASPILFLTAPVLALILAMMLWAPMPMPYPVLDLNLGILFIMAISSLAVYSILGSGWASNSKYALIGALRAVAQTISYEVSLGLILLSAVIFSGGYTLQTFNTTQEDTWLLLPLWPLAIMWFISTLAETNRAPFDLTEGESELVSGFNVEYAAGPFALFFLAEYSNILLMNTHSTVLFLGASFTPDAPELMTISIATKTAMLSILFLWMRASYPRFRYDQLMHLIWKNFLPITLVLVLWHIALPIALAGLPPQT</sequence>
<comment type="function">
    <text evidence="1">Core subunit of the mitochondrial membrane respiratory chain NADH dehydrogenase (Complex I) which catalyzes electron transfer from NADH through the respiratory chain, using ubiquinone as an electron acceptor. Essential for the catalytic activity and assembly of complex I.</text>
</comment>
<comment type="catalytic activity">
    <reaction evidence="1">
        <text>a ubiquinone + NADH + 5 H(+)(in) = a ubiquinol + NAD(+) + 4 H(+)(out)</text>
        <dbReference type="Rhea" id="RHEA:29091"/>
        <dbReference type="Rhea" id="RHEA-COMP:9565"/>
        <dbReference type="Rhea" id="RHEA-COMP:9566"/>
        <dbReference type="ChEBI" id="CHEBI:15378"/>
        <dbReference type="ChEBI" id="CHEBI:16389"/>
        <dbReference type="ChEBI" id="CHEBI:17976"/>
        <dbReference type="ChEBI" id="CHEBI:57540"/>
        <dbReference type="ChEBI" id="CHEBI:57945"/>
        <dbReference type="EC" id="7.1.1.2"/>
    </reaction>
</comment>
<comment type="subunit">
    <text evidence="2">Core subunit of respiratory chain NADH dehydrogenase (Complex I) which is composed of 45 different subunits.</text>
</comment>
<comment type="subcellular location">
    <subcellularLocation>
        <location evidence="2">Mitochondrion inner membrane</location>
        <topology evidence="3">Multi-pass membrane protein</topology>
    </subcellularLocation>
</comment>
<comment type="similarity">
    <text evidence="4">Belongs to the complex I subunit 1 family.</text>
</comment>
<name>NU1M_DANRE</name>
<proteinExistence type="inferred from homology"/>
<organism>
    <name type="scientific">Danio rerio</name>
    <name type="common">Zebrafish</name>
    <name type="synonym">Brachydanio rerio</name>
    <dbReference type="NCBI Taxonomy" id="7955"/>
    <lineage>
        <taxon>Eukaryota</taxon>
        <taxon>Metazoa</taxon>
        <taxon>Chordata</taxon>
        <taxon>Craniata</taxon>
        <taxon>Vertebrata</taxon>
        <taxon>Euteleostomi</taxon>
        <taxon>Actinopterygii</taxon>
        <taxon>Neopterygii</taxon>
        <taxon>Teleostei</taxon>
        <taxon>Ostariophysi</taxon>
        <taxon>Cypriniformes</taxon>
        <taxon>Danionidae</taxon>
        <taxon>Danioninae</taxon>
        <taxon>Danio</taxon>
    </lineage>
</organism>
<reference key="1">
    <citation type="journal article" date="2001" name="Genome Res.">
        <title>The complete sequence of the zebrafish (Danio rerio) mitochondrial genome and evolutionary patterns in vertebrate mitochondrial DNA.</title>
        <authorList>
            <person name="Broughton R.E."/>
            <person name="Milam J.E."/>
            <person name="Roe B.A."/>
        </authorList>
    </citation>
    <scope>NUCLEOTIDE SEQUENCE [LARGE SCALE GENOMIC DNA]</scope>
    <source>
        <strain evidence="5">Tuebingen</strain>
    </source>
</reference>
<protein>
    <recommendedName>
        <fullName>NADH-ubiquinone oxidoreductase chain 1</fullName>
        <ecNumber evidence="1">7.1.1.2</ecNumber>
    </recommendedName>
    <alternativeName>
        <fullName>NADH dehydrogenase subunit 1</fullName>
    </alternativeName>
</protein>
<dbReference type="EC" id="7.1.1.2" evidence="1"/>
<dbReference type="EMBL" id="AC024175">
    <property type="protein sequence ID" value="AAF74297.1"/>
    <property type="molecule type" value="Genomic_DNA"/>
</dbReference>
<dbReference type="RefSeq" id="NP_059331.1">
    <property type="nucleotide sequence ID" value="NC_002333.2"/>
</dbReference>
<dbReference type="SMR" id="Q9MIZ0"/>
<dbReference type="FunCoup" id="Q9MIZ0">
    <property type="interactions" value="20"/>
</dbReference>
<dbReference type="STRING" id="7955.ENSDARP00000087869"/>
<dbReference type="PaxDb" id="7955-ENSDARP00000087869"/>
<dbReference type="Ensembl" id="ENSDART00000093596">
    <property type="protein sequence ID" value="ENSDARP00000087869"/>
    <property type="gene ID" value="ENSDARG00000063895"/>
</dbReference>
<dbReference type="GeneID" id="140531"/>
<dbReference type="KEGG" id="dre:140531"/>
<dbReference type="AGR" id="ZFIN:ZDB-GENE-011205-7"/>
<dbReference type="CTD" id="4535"/>
<dbReference type="ZFIN" id="ZDB-GENE-011205-7">
    <property type="gene designation" value="mt-nd1"/>
</dbReference>
<dbReference type="eggNOG" id="KOG4770">
    <property type="taxonomic scope" value="Eukaryota"/>
</dbReference>
<dbReference type="HOGENOM" id="CLU_015134_0_1_1"/>
<dbReference type="InParanoid" id="Q9MIZ0"/>
<dbReference type="OMA" id="WSGWASN"/>
<dbReference type="OrthoDB" id="531329at2759"/>
<dbReference type="PhylomeDB" id="Q9MIZ0"/>
<dbReference type="TreeFam" id="TF352957"/>
<dbReference type="Reactome" id="R-DRE-611105">
    <property type="pathway name" value="Respiratory electron transport"/>
</dbReference>
<dbReference type="PRO" id="PR:Q9MIZ0"/>
<dbReference type="Proteomes" id="UP000000437">
    <property type="component" value="Mitochondrion MT"/>
</dbReference>
<dbReference type="Bgee" id="ENSDARG00000063895">
    <property type="expression patterns" value="Expressed in brain and 21 other cell types or tissues"/>
</dbReference>
<dbReference type="GO" id="GO:0005743">
    <property type="term" value="C:mitochondrial inner membrane"/>
    <property type="evidence" value="ECO:0000250"/>
    <property type="project" value="UniProtKB"/>
</dbReference>
<dbReference type="GO" id="GO:0045271">
    <property type="term" value="C:respiratory chain complex I"/>
    <property type="evidence" value="ECO:0000318"/>
    <property type="project" value="GO_Central"/>
</dbReference>
<dbReference type="GO" id="GO:0008137">
    <property type="term" value="F:NADH dehydrogenase (ubiquinone) activity"/>
    <property type="evidence" value="ECO:0000250"/>
    <property type="project" value="UniProtKB"/>
</dbReference>
<dbReference type="GO" id="GO:0009060">
    <property type="term" value="P:aerobic respiration"/>
    <property type="evidence" value="ECO:0000318"/>
    <property type="project" value="GO_Central"/>
</dbReference>
<dbReference type="GO" id="GO:0006120">
    <property type="term" value="P:mitochondrial electron transport, NADH to ubiquinone"/>
    <property type="evidence" value="ECO:0000250"/>
    <property type="project" value="UniProtKB"/>
</dbReference>
<dbReference type="GO" id="GO:0032981">
    <property type="term" value="P:mitochondrial respiratory chain complex I assembly"/>
    <property type="evidence" value="ECO:0000250"/>
    <property type="project" value="UniProtKB"/>
</dbReference>
<dbReference type="HAMAP" id="MF_01350">
    <property type="entry name" value="NDH1_NuoH"/>
    <property type="match status" value="1"/>
</dbReference>
<dbReference type="InterPro" id="IPR001694">
    <property type="entry name" value="NADH_UbQ_OxRdtase_su1/FPO"/>
</dbReference>
<dbReference type="InterPro" id="IPR018086">
    <property type="entry name" value="NADH_UbQ_OxRdtase_su1_CS"/>
</dbReference>
<dbReference type="PANTHER" id="PTHR11432">
    <property type="entry name" value="NADH DEHYDROGENASE SUBUNIT 1"/>
    <property type="match status" value="1"/>
</dbReference>
<dbReference type="PANTHER" id="PTHR11432:SF3">
    <property type="entry name" value="NADH-UBIQUINONE OXIDOREDUCTASE CHAIN 1"/>
    <property type="match status" value="1"/>
</dbReference>
<dbReference type="Pfam" id="PF00146">
    <property type="entry name" value="NADHdh"/>
    <property type="match status" value="1"/>
</dbReference>
<dbReference type="PROSITE" id="PS00667">
    <property type="entry name" value="COMPLEX1_ND1_1"/>
    <property type="match status" value="1"/>
</dbReference>
<dbReference type="PROSITE" id="PS00668">
    <property type="entry name" value="COMPLEX1_ND1_2"/>
    <property type="match status" value="1"/>
</dbReference>
<feature type="chain" id="PRO_0000117357" description="NADH-ubiquinone oxidoreductase chain 1">
    <location>
        <begin position="1"/>
        <end position="324"/>
    </location>
</feature>
<feature type="transmembrane region" description="Helical" evidence="3">
    <location>
        <begin position="9"/>
        <end position="29"/>
    </location>
</feature>
<feature type="transmembrane region" description="Helical" evidence="3">
    <location>
        <begin position="75"/>
        <end position="95"/>
    </location>
</feature>
<feature type="transmembrane region" description="Helical" evidence="3">
    <location>
        <begin position="106"/>
        <end position="126"/>
    </location>
</feature>
<feature type="transmembrane region" description="Helical" evidence="3">
    <location>
        <begin position="146"/>
        <end position="166"/>
    </location>
</feature>
<feature type="transmembrane region" description="Helical" evidence="3">
    <location>
        <begin position="178"/>
        <end position="198"/>
    </location>
</feature>
<feature type="transmembrane region" description="Helical" evidence="3">
    <location>
        <begin position="212"/>
        <end position="232"/>
    </location>
</feature>
<feature type="transmembrane region" description="Helical" evidence="3">
    <location>
        <begin position="259"/>
        <end position="279"/>
    </location>
</feature>
<feature type="transmembrane region" description="Helical" evidence="3">
    <location>
        <begin position="299"/>
        <end position="319"/>
    </location>
</feature>
<geneLocation type="mitochondrion"/>
<keyword id="KW-0249">Electron transport</keyword>
<keyword id="KW-0472">Membrane</keyword>
<keyword id="KW-0496">Mitochondrion</keyword>
<keyword id="KW-0999">Mitochondrion inner membrane</keyword>
<keyword id="KW-0520">NAD</keyword>
<keyword id="KW-1185">Reference proteome</keyword>
<keyword id="KW-0679">Respiratory chain</keyword>
<keyword id="KW-1278">Translocase</keyword>
<keyword id="KW-0812">Transmembrane</keyword>
<keyword id="KW-1133">Transmembrane helix</keyword>
<keyword id="KW-0813">Transport</keyword>
<keyword id="KW-0830">Ubiquinone</keyword>
<evidence type="ECO:0000250" key="1">
    <source>
        <dbReference type="UniProtKB" id="P03886"/>
    </source>
</evidence>
<evidence type="ECO:0000250" key="2">
    <source>
        <dbReference type="UniProtKB" id="P03887"/>
    </source>
</evidence>
<evidence type="ECO:0000255" key="3"/>
<evidence type="ECO:0000305" key="4"/>
<evidence type="ECO:0000312" key="5">
    <source>
        <dbReference type="Proteomes" id="UP000000437"/>
    </source>
</evidence>